<name>YL215_MIMIV</name>
<organism>
    <name type="scientific">Acanthamoeba polyphaga mimivirus</name>
    <name type="common">APMV</name>
    <dbReference type="NCBI Taxonomy" id="212035"/>
    <lineage>
        <taxon>Viruses</taxon>
        <taxon>Varidnaviria</taxon>
        <taxon>Bamfordvirae</taxon>
        <taxon>Nucleocytoviricota</taxon>
        <taxon>Megaviricetes</taxon>
        <taxon>Imitervirales</taxon>
        <taxon>Mimiviridae</taxon>
        <taxon>Megamimivirinae</taxon>
        <taxon>Mimivirus</taxon>
        <taxon>Mimivirus bradfordmassiliense</taxon>
    </lineage>
</organism>
<protein>
    <recommendedName>
        <fullName>Putative ankyrin repeat protein L215</fullName>
    </recommendedName>
</protein>
<organismHost>
    <name type="scientific">Acanthamoeba polyphaga</name>
    <name type="common">Amoeba</name>
    <dbReference type="NCBI Taxonomy" id="5757"/>
</organismHost>
<feature type="chain" id="PRO_0000067163" description="Putative ankyrin repeat protein L215">
    <location>
        <begin position="1"/>
        <end position="121"/>
    </location>
</feature>
<feature type="repeat" description="ANK 1">
    <location>
        <begin position="10"/>
        <end position="40"/>
    </location>
</feature>
<feature type="repeat" description="ANK 2">
    <location>
        <begin position="42"/>
        <end position="71"/>
    </location>
</feature>
<reference key="1">
    <citation type="journal article" date="2004" name="Science">
        <title>The 1.2-megabase genome sequence of Mimivirus.</title>
        <authorList>
            <person name="Raoult D."/>
            <person name="Audic S."/>
            <person name="Robert C."/>
            <person name="Abergel C."/>
            <person name="Renesto P."/>
            <person name="Ogata H."/>
            <person name="La Scola B."/>
            <person name="Susan M."/>
            <person name="Claverie J.-M."/>
        </authorList>
    </citation>
    <scope>NUCLEOTIDE SEQUENCE [LARGE SCALE GENOMIC DNA]</scope>
    <source>
        <strain>Rowbotham-Bradford</strain>
    </source>
</reference>
<proteinExistence type="predicted"/>
<dbReference type="EMBL" id="AY653733">
    <property type="protein sequence ID" value="AAV50488.1"/>
    <property type="molecule type" value="Genomic_DNA"/>
</dbReference>
<dbReference type="SMR" id="Q5UQB4"/>
<dbReference type="Proteomes" id="UP000001134">
    <property type="component" value="Genome"/>
</dbReference>
<dbReference type="Gene3D" id="1.25.40.20">
    <property type="entry name" value="Ankyrin repeat-containing domain"/>
    <property type="match status" value="1"/>
</dbReference>
<dbReference type="InterPro" id="IPR002110">
    <property type="entry name" value="Ankyrin_rpt"/>
</dbReference>
<dbReference type="InterPro" id="IPR036770">
    <property type="entry name" value="Ankyrin_rpt-contain_sf"/>
</dbReference>
<dbReference type="Pfam" id="PF12796">
    <property type="entry name" value="Ank_2"/>
    <property type="match status" value="1"/>
</dbReference>
<dbReference type="SMART" id="SM00248">
    <property type="entry name" value="ANK"/>
    <property type="match status" value="2"/>
</dbReference>
<dbReference type="SUPFAM" id="SSF48403">
    <property type="entry name" value="Ankyrin repeat"/>
    <property type="match status" value="1"/>
</dbReference>
<gene>
    <name type="ordered locus">MIMI_L215</name>
</gene>
<keyword id="KW-0040">ANK repeat</keyword>
<keyword id="KW-1185">Reference proteome</keyword>
<keyword id="KW-0677">Repeat</keyword>
<accession>Q5UQB4</accession>
<sequence>MLFTYNKNPQYDSILMYAASNGYDKIVKLILDKVGTSFKEHIHETILLWAFQNEHYETIQLLIDHGFNKLVISNLLTNKNQFDVSNKYLIYFMADEEYYYQVRENIRNDQRVSTIKNTYRI</sequence>